<reference key="1">
    <citation type="journal article" date="2005" name="Nat. Biotechnol.">
        <title>Complete genome sequence of the plant commensal Pseudomonas fluorescens Pf-5.</title>
        <authorList>
            <person name="Paulsen I.T."/>
            <person name="Press C.M."/>
            <person name="Ravel J."/>
            <person name="Kobayashi D.Y."/>
            <person name="Myers G.S.A."/>
            <person name="Mavrodi D.V."/>
            <person name="DeBoy R.T."/>
            <person name="Seshadri R."/>
            <person name="Ren Q."/>
            <person name="Madupu R."/>
            <person name="Dodson R.J."/>
            <person name="Durkin A.S."/>
            <person name="Brinkac L.M."/>
            <person name="Daugherty S.C."/>
            <person name="Sullivan S.A."/>
            <person name="Rosovitz M.J."/>
            <person name="Gwinn M.L."/>
            <person name="Zhou L."/>
            <person name="Schneider D.J."/>
            <person name="Cartinhour S.W."/>
            <person name="Nelson W.C."/>
            <person name="Weidman J."/>
            <person name="Watkins K."/>
            <person name="Tran K."/>
            <person name="Khouri H."/>
            <person name="Pierson E.A."/>
            <person name="Pierson L.S. III"/>
            <person name="Thomashow L.S."/>
            <person name="Loper J.E."/>
        </authorList>
    </citation>
    <scope>NUCLEOTIDE SEQUENCE [LARGE SCALE GENOMIC DNA]</scope>
    <source>
        <strain>ATCC BAA-477 / NRRL B-23932 / Pf-5</strain>
    </source>
</reference>
<organism>
    <name type="scientific">Pseudomonas fluorescens (strain ATCC BAA-477 / NRRL B-23932 / Pf-5)</name>
    <dbReference type="NCBI Taxonomy" id="220664"/>
    <lineage>
        <taxon>Bacteria</taxon>
        <taxon>Pseudomonadati</taxon>
        <taxon>Pseudomonadota</taxon>
        <taxon>Gammaproteobacteria</taxon>
        <taxon>Pseudomonadales</taxon>
        <taxon>Pseudomonadaceae</taxon>
        <taxon>Pseudomonas</taxon>
    </lineage>
</organism>
<gene>
    <name evidence="1" type="primary">arnA</name>
    <name type="ordered locus">PFL_3045</name>
</gene>
<sequence>MSNKAVVFAYHDIGCAGIEALLNAGYEIAAVFTHADDPKENTFYGSVAQLCARKGIAVHAPEDANHPLWIERIAKLNPDYLFSFYYRNLLSEPLLATASKGAFNLHGSLLPRYRGRAPANWVLVKGETETGVTLHRMVKRADAGAIIAQERVAIERSDTALSLHHKLRDAAASLLRDTLPALAQGKITETAQDESKASYFGRRTAADGKIDWQRPAEELFNLVRAVTQPYPGAFCAVGEHKLIVWSAEVAKGNEGQAPGRVISVDPLRIACGQDSLVITSGQRNANGLFLGGPQLANELGLVDGSLLRGAESGRKPRRTRVLILGVNGFIGNHLSERLLRDDKYDVYGLDIGSDAIERLRSHPNFHFVEGDISIHSEWIEYHIKKCDVVLPLVAIATPIEYTRNPLRVFELDFEENLKLVRYCVKYNKRVIFPSTSEVYGMCQDKNFDEDTSNLIVGPINKQRWIYSVSKQLLDRVIWAYGAKGLNFTLFRPFNWMGPRLDRLDSARIGSSRAITQLILNLVEGTPIRLFDGGEQKRCFTDIADGIEALARIVDNENDCCNGQIINIGNPDNEASIRQLGEELLRQFEAHPLRGNFPPFAGFRDVESKAFYGAGYQDVEHRKPSIDNAKRLLNWEPTVEMSETIGNTLDFFLREAMLEIADRAKQEAR</sequence>
<name>ARNA_PSEF5</name>
<evidence type="ECO:0000255" key="1">
    <source>
        <dbReference type="HAMAP-Rule" id="MF_01166"/>
    </source>
</evidence>
<accession>Q4KC82</accession>
<dbReference type="EC" id="2.1.2.13" evidence="1"/>
<dbReference type="EC" id="1.1.1.305" evidence="1"/>
<dbReference type="EMBL" id="CP000076">
    <property type="protein sequence ID" value="AAY92315.1"/>
    <property type="molecule type" value="Genomic_DNA"/>
</dbReference>
<dbReference type="RefSeq" id="WP_011061333.1">
    <property type="nucleotide sequence ID" value="NC_004129.6"/>
</dbReference>
<dbReference type="SMR" id="Q4KC82"/>
<dbReference type="STRING" id="220664.PFL_3045"/>
<dbReference type="KEGG" id="pfl:PFL_3045"/>
<dbReference type="PATRIC" id="fig|220664.5.peg.3105"/>
<dbReference type="eggNOG" id="COG0223">
    <property type="taxonomic scope" value="Bacteria"/>
</dbReference>
<dbReference type="eggNOG" id="COG0451">
    <property type="taxonomic scope" value="Bacteria"/>
</dbReference>
<dbReference type="HOGENOM" id="CLU_007383_23_0_6"/>
<dbReference type="UniPathway" id="UPA00030"/>
<dbReference type="UniPathway" id="UPA00032">
    <property type="reaction ID" value="UER00492"/>
</dbReference>
<dbReference type="UniPathway" id="UPA00032">
    <property type="reaction ID" value="UER00494"/>
</dbReference>
<dbReference type="Proteomes" id="UP000008540">
    <property type="component" value="Chromosome"/>
</dbReference>
<dbReference type="GO" id="GO:0016020">
    <property type="term" value="C:membrane"/>
    <property type="evidence" value="ECO:0007669"/>
    <property type="project" value="GOC"/>
</dbReference>
<dbReference type="GO" id="GO:0016831">
    <property type="term" value="F:carboxy-lyase activity"/>
    <property type="evidence" value="ECO:0007669"/>
    <property type="project" value="InterPro"/>
</dbReference>
<dbReference type="GO" id="GO:0099619">
    <property type="term" value="F:UDP-4-amino-4-deoxy-L-arabinose formyltransferase activity"/>
    <property type="evidence" value="ECO:0007669"/>
    <property type="project" value="UniProtKB-EC"/>
</dbReference>
<dbReference type="GO" id="GO:0099618">
    <property type="term" value="F:UDP-glucuronate dehydrogenase activity"/>
    <property type="evidence" value="ECO:0007669"/>
    <property type="project" value="UniProtKB-EC"/>
</dbReference>
<dbReference type="GO" id="GO:0009245">
    <property type="term" value="P:lipid A biosynthetic process"/>
    <property type="evidence" value="ECO:0007669"/>
    <property type="project" value="UniProtKB-KW"/>
</dbReference>
<dbReference type="GO" id="GO:0009103">
    <property type="term" value="P:lipopolysaccharide biosynthetic process"/>
    <property type="evidence" value="ECO:0007669"/>
    <property type="project" value="UniProtKB-UniRule"/>
</dbReference>
<dbReference type="GO" id="GO:0046677">
    <property type="term" value="P:response to antibiotic"/>
    <property type="evidence" value="ECO:0007669"/>
    <property type="project" value="UniProtKB-KW"/>
</dbReference>
<dbReference type="CDD" id="cd08702">
    <property type="entry name" value="Arna_FMT_C"/>
    <property type="match status" value="1"/>
</dbReference>
<dbReference type="CDD" id="cd05257">
    <property type="entry name" value="Arna_like_SDR_e"/>
    <property type="match status" value="1"/>
</dbReference>
<dbReference type="FunFam" id="3.40.50.720:FF:000197">
    <property type="entry name" value="Bifunctional polymyxin resistance protein ArnA"/>
    <property type="match status" value="1"/>
</dbReference>
<dbReference type="Gene3D" id="3.40.50.12230">
    <property type="match status" value="1"/>
</dbReference>
<dbReference type="Gene3D" id="3.40.50.720">
    <property type="entry name" value="NAD(P)-binding Rossmann-like Domain"/>
    <property type="match status" value="1"/>
</dbReference>
<dbReference type="HAMAP" id="MF_01166">
    <property type="entry name" value="ArnA"/>
    <property type="match status" value="1"/>
</dbReference>
<dbReference type="InterPro" id="IPR045869">
    <property type="entry name" value="Arna-like_SDR_e"/>
</dbReference>
<dbReference type="InterPro" id="IPR021168">
    <property type="entry name" value="Bifun_polymyxin_resist_ArnA"/>
</dbReference>
<dbReference type="InterPro" id="IPR001509">
    <property type="entry name" value="Epimerase_deHydtase"/>
</dbReference>
<dbReference type="InterPro" id="IPR005793">
    <property type="entry name" value="Formyl_trans_C"/>
</dbReference>
<dbReference type="InterPro" id="IPR002376">
    <property type="entry name" value="Formyl_transf_N"/>
</dbReference>
<dbReference type="InterPro" id="IPR036477">
    <property type="entry name" value="Formyl_transf_N_sf"/>
</dbReference>
<dbReference type="InterPro" id="IPR011034">
    <property type="entry name" value="Formyl_transferase-like_C_sf"/>
</dbReference>
<dbReference type="InterPro" id="IPR050177">
    <property type="entry name" value="Lipid_A_modif_metabolic_enz"/>
</dbReference>
<dbReference type="InterPro" id="IPR036291">
    <property type="entry name" value="NAD(P)-bd_dom_sf"/>
</dbReference>
<dbReference type="NCBIfam" id="NF005414">
    <property type="entry name" value="PRK06988.1"/>
    <property type="match status" value="1"/>
</dbReference>
<dbReference type="NCBIfam" id="NF005998">
    <property type="entry name" value="PRK08125.1"/>
    <property type="match status" value="1"/>
</dbReference>
<dbReference type="NCBIfam" id="NF008872">
    <property type="entry name" value="PRK11908.1"/>
    <property type="match status" value="1"/>
</dbReference>
<dbReference type="PANTHER" id="PTHR43245">
    <property type="entry name" value="BIFUNCTIONAL POLYMYXIN RESISTANCE PROTEIN ARNA"/>
    <property type="match status" value="1"/>
</dbReference>
<dbReference type="PANTHER" id="PTHR43245:SF13">
    <property type="entry name" value="UDP-D-APIOSE_UDP-D-XYLOSE SYNTHASE 2"/>
    <property type="match status" value="1"/>
</dbReference>
<dbReference type="Pfam" id="PF01370">
    <property type="entry name" value="Epimerase"/>
    <property type="match status" value="1"/>
</dbReference>
<dbReference type="Pfam" id="PF02911">
    <property type="entry name" value="Formyl_trans_C"/>
    <property type="match status" value="1"/>
</dbReference>
<dbReference type="Pfam" id="PF00551">
    <property type="entry name" value="Formyl_trans_N"/>
    <property type="match status" value="1"/>
</dbReference>
<dbReference type="PIRSF" id="PIRSF036506">
    <property type="entry name" value="Bifun_polymyxin_resist_ArnA"/>
    <property type="match status" value="1"/>
</dbReference>
<dbReference type="SUPFAM" id="SSF50486">
    <property type="entry name" value="FMT C-terminal domain-like"/>
    <property type="match status" value="1"/>
</dbReference>
<dbReference type="SUPFAM" id="SSF53328">
    <property type="entry name" value="Formyltransferase"/>
    <property type="match status" value="1"/>
</dbReference>
<dbReference type="SUPFAM" id="SSF51735">
    <property type="entry name" value="NAD(P)-binding Rossmann-fold domains"/>
    <property type="match status" value="1"/>
</dbReference>
<comment type="function">
    <text evidence="1">Bifunctional enzyme that catalyzes the oxidative decarboxylation of UDP-glucuronic acid (UDP-GlcUA) to UDP-4-keto-arabinose (UDP-Ara4O) and the addition of a formyl group to UDP-4-amino-4-deoxy-L-arabinose (UDP-L-Ara4N) to form UDP-L-4-formamido-arabinose (UDP-L-Ara4FN). The modified arabinose is attached to lipid A and is required for resistance to polymyxin and cationic antimicrobial peptides.</text>
</comment>
<comment type="catalytic activity">
    <reaction evidence="1">
        <text>UDP-alpha-D-glucuronate + NAD(+) = UDP-beta-L-threo-pentopyranos-4-ulose + CO2 + NADH</text>
        <dbReference type="Rhea" id="RHEA:24702"/>
        <dbReference type="ChEBI" id="CHEBI:16526"/>
        <dbReference type="ChEBI" id="CHEBI:57540"/>
        <dbReference type="ChEBI" id="CHEBI:57945"/>
        <dbReference type="ChEBI" id="CHEBI:58052"/>
        <dbReference type="ChEBI" id="CHEBI:58710"/>
        <dbReference type="EC" id="1.1.1.305"/>
    </reaction>
</comment>
<comment type="catalytic activity">
    <reaction evidence="1">
        <text>UDP-4-amino-4-deoxy-beta-L-arabinose + (6R)-10-formyltetrahydrofolate = UDP-4-deoxy-4-formamido-beta-L-arabinose + (6S)-5,6,7,8-tetrahydrofolate + H(+)</text>
        <dbReference type="Rhea" id="RHEA:24706"/>
        <dbReference type="ChEBI" id="CHEBI:15378"/>
        <dbReference type="ChEBI" id="CHEBI:57453"/>
        <dbReference type="ChEBI" id="CHEBI:58708"/>
        <dbReference type="ChEBI" id="CHEBI:58709"/>
        <dbReference type="ChEBI" id="CHEBI:195366"/>
        <dbReference type="EC" id="2.1.2.13"/>
    </reaction>
</comment>
<comment type="pathway">
    <text evidence="1">Nucleotide-sugar biosynthesis; UDP-4-deoxy-4-formamido-beta-L-arabinose biosynthesis; UDP-4-deoxy-4-formamido-beta-L-arabinose from UDP-alpha-D-glucuronate: step 1/3.</text>
</comment>
<comment type="pathway">
    <text evidence="1">Nucleotide-sugar biosynthesis; UDP-4-deoxy-4-formamido-beta-L-arabinose biosynthesis; UDP-4-deoxy-4-formamido-beta-L-arabinose from UDP-alpha-D-glucuronate: step 3/3.</text>
</comment>
<comment type="pathway">
    <text evidence="1">Bacterial outer membrane biogenesis; lipopolysaccharide biosynthesis.</text>
</comment>
<comment type="subunit">
    <text evidence="1">Homohexamer, formed by a dimer of trimers.</text>
</comment>
<comment type="similarity">
    <text evidence="1">In the N-terminal section; belongs to the Fmt family. UDP-L-Ara4N formyltransferase subfamily.</text>
</comment>
<comment type="similarity">
    <text evidence="1">In the C-terminal section; belongs to the NAD(P)-dependent epimerase/dehydratase family. UDP-glucuronic acid decarboxylase subfamily.</text>
</comment>
<keyword id="KW-0046">Antibiotic resistance</keyword>
<keyword id="KW-0441">Lipid A biosynthesis</keyword>
<keyword id="KW-0444">Lipid biosynthesis</keyword>
<keyword id="KW-0443">Lipid metabolism</keyword>
<keyword id="KW-0448">Lipopolysaccharide biosynthesis</keyword>
<keyword id="KW-0511">Multifunctional enzyme</keyword>
<keyword id="KW-0520">NAD</keyword>
<keyword id="KW-0560">Oxidoreductase</keyword>
<keyword id="KW-0808">Transferase</keyword>
<protein>
    <recommendedName>
        <fullName evidence="1">Bifunctional polymyxin resistance protein ArnA</fullName>
    </recommendedName>
    <domain>
        <recommendedName>
            <fullName evidence="1">UDP-4-amino-4-deoxy-L-arabinose formyltransferase</fullName>
            <ecNumber evidence="1">2.1.2.13</ecNumber>
        </recommendedName>
        <alternativeName>
            <fullName evidence="1">ArnAFT</fullName>
        </alternativeName>
        <alternativeName>
            <fullName evidence="1">UDP-L-Ara4N formyltransferase</fullName>
        </alternativeName>
    </domain>
    <domain>
        <recommendedName>
            <fullName evidence="1">UDP-glucuronic acid oxidase, UDP-4-keto-hexauronic acid decarboxylating</fullName>
            <ecNumber evidence="1">1.1.1.305</ecNumber>
        </recommendedName>
        <alternativeName>
            <fullName evidence="1">ArnADH</fullName>
        </alternativeName>
        <alternativeName>
            <fullName evidence="1">UDP-GlcUA decarboxylase</fullName>
        </alternativeName>
        <alternativeName>
            <fullName evidence="1">UDP-glucuronic acid dehydrogenase</fullName>
        </alternativeName>
    </domain>
</protein>
<proteinExistence type="inferred from homology"/>
<feature type="chain" id="PRO_0000083104" description="Bifunctional polymyxin resistance protein ArnA">
    <location>
        <begin position="1"/>
        <end position="668"/>
    </location>
</feature>
<feature type="region of interest" description="Formyltransferase ArnAFT">
    <location>
        <begin position="1"/>
        <end position="307"/>
    </location>
</feature>
<feature type="region of interest" description="Dehydrogenase ArnADH">
    <location>
        <begin position="317"/>
        <end position="668"/>
    </location>
</feature>
<feature type="active site" description="Proton donor; for formyltransferase activity" evidence="1">
    <location>
        <position position="106"/>
    </location>
</feature>
<feature type="active site" description="Proton acceptor; for decarboxylase activity" evidence="1">
    <location>
        <position position="437"/>
    </location>
</feature>
<feature type="active site" description="Proton donor; for decarboxylase activity" evidence="1">
    <location>
        <position position="621"/>
    </location>
</feature>
<feature type="binding site" evidence="1">
    <location>
        <position position="116"/>
    </location>
    <ligand>
        <name>(6R)-10-formyltetrahydrofolate</name>
        <dbReference type="ChEBI" id="CHEBI:195366"/>
    </ligand>
</feature>
<feature type="binding site" evidence="1">
    <location>
        <begin position="138"/>
        <end position="142"/>
    </location>
    <ligand>
        <name>(6R)-10-formyltetrahydrofolate</name>
        <dbReference type="ChEBI" id="CHEBI:195366"/>
    </ligand>
</feature>
<feature type="binding site" evidence="1">
    <location>
        <position position="350"/>
    </location>
    <ligand>
        <name>NAD(+)</name>
        <dbReference type="ChEBI" id="CHEBI:57540"/>
    </ligand>
</feature>
<feature type="binding site" evidence="1">
    <location>
        <begin position="371"/>
        <end position="372"/>
    </location>
    <ligand>
        <name>NAD(+)</name>
        <dbReference type="ChEBI" id="CHEBI:57540"/>
    </ligand>
</feature>
<feature type="binding site" evidence="1">
    <location>
        <position position="396"/>
    </location>
    <ligand>
        <name>UDP-alpha-D-glucuronate</name>
        <dbReference type="ChEBI" id="CHEBI:58052"/>
    </ligand>
</feature>
<feature type="binding site" evidence="1">
    <location>
        <position position="401"/>
    </location>
    <ligand>
        <name>UDP-alpha-D-glucuronate</name>
        <dbReference type="ChEBI" id="CHEBI:58052"/>
    </ligand>
</feature>
<feature type="binding site" evidence="1">
    <location>
        <begin position="435"/>
        <end position="436"/>
    </location>
    <ligand>
        <name>UDP-alpha-D-glucuronate</name>
        <dbReference type="ChEBI" id="CHEBI:58052"/>
    </ligand>
</feature>
<feature type="binding site" evidence="1">
    <location>
        <position position="463"/>
    </location>
    <ligand>
        <name>UDP-alpha-D-glucuronate</name>
        <dbReference type="ChEBI" id="CHEBI:58052"/>
    </ligand>
</feature>
<feature type="binding site" evidence="1">
    <location>
        <position position="494"/>
    </location>
    <ligand>
        <name>UDP-alpha-D-glucuronate</name>
        <dbReference type="ChEBI" id="CHEBI:58052"/>
    </ligand>
</feature>
<feature type="binding site" evidence="1">
    <location>
        <begin position="528"/>
        <end position="537"/>
    </location>
    <ligand>
        <name>UDP-alpha-D-glucuronate</name>
        <dbReference type="ChEBI" id="CHEBI:58052"/>
    </ligand>
</feature>
<feature type="binding site" evidence="1">
    <location>
        <position position="615"/>
    </location>
    <ligand>
        <name>UDP-alpha-D-glucuronate</name>
        <dbReference type="ChEBI" id="CHEBI:58052"/>
    </ligand>
</feature>
<feature type="site" description="Transition state stabilizer" evidence="1">
    <location>
        <position position="104"/>
    </location>
</feature>
<feature type="site" description="Raises pKa of active site His" evidence="1">
    <location>
        <position position="142"/>
    </location>
</feature>